<feature type="chain" id="PRO_0000296670" description="KH homology domain-containing protein 4">
    <location>
        <begin position="1"/>
        <end position="612"/>
    </location>
</feature>
<feature type="domain" description="KH 1" evidence="1">
    <location>
        <begin position="102"/>
        <end position="182"/>
    </location>
</feature>
<feature type="domain" description="KH 2" evidence="1">
    <location>
        <begin position="237"/>
        <end position="319"/>
    </location>
</feature>
<feature type="region of interest" description="Disordered" evidence="2">
    <location>
        <begin position="1"/>
        <end position="53"/>
    </location>
</feature>
<feature type="region of interest" description="Disordered" evidence="2">
    <location>
        <begin position="436"/>
        <end position="549"/>
    </location>
</feature>
<feature type="region of interest" description="Required for nuclear retention" evidence="1">
    <location>
        <begin position="478"/>
        <end position="547"/>
    </location>
</feature>
<feature type="region of interest" description="Disordered" evidence="2">
    <location>
        <begin position="567"/>
        <end position="612"/>
    </location>
</feature>
<feature type="compositionally biased region" description="Low complexity" evidence="2">
    <location>
        <begin position="25"/>
        <end position="36"/>
    </location>
</feature>
<feature type="compositionally biased region" description="Basic and acidic residues" evidence="2">
    <location>
        <begin position="461"/>
        <end position="472"/>
    </location>
</feature>
<feature type="compositionally biased region" description="Polar residues" evidence="2">
    <location>
        <begin position="486"/>
        <end position="496"/>
    </location>
</feature>
<feature type="compositionally biased region" description="Low complexity" evidence="2">
    <location>
        <begin position="499"/>
        <end position="508"/>
    </location>
</feature>
<feature type="modified residue" description="Phosphoserine" evidence="1">
    <location>
        <position position="569"/>
    </location>
</feature>
<feature type="modified residue" description="Phosphoserine" evidence="1">
    <location>
        <position position="570"/>
    </location>
</feature>
<feature type="splice variant" id="VSP_027244" description="In isoform 4." evidence="4">
    <original>LQAPGKSLTSNKSKDDLVVAEVEINDVPLTCRNLLTRGQTQDEI</original>
    <variation>VLRALDALRFGIFFFLPFLHLSVAWSLGLMKMKPVRVKITFGSI</variation>
    <location>
        <begin position="88"/>
        <end position="131"/>
    </location>
</feature>
<feature type="splice variant" id="VSP_027245" description="In isoform 4." evidence="4">
    <location>
        <begin position="132"/>
        <end position="612"/>
    </location>
</feature>
<feature type="splice variant" id="VSP_027246" description="In isoform 3." evidence="4">
    <original>SPISAP</original>
    <variation>VGCRDM</variation>
    <location>
        <begin position="425"/>
        <end position="430"/>
    </location>
</feature>
<feature type="splice variant" id="VSP_027247" description="In isoform 3." evidence="4">
    <location>
        <begin position="431"/>
        <end position="612"/>
    </location>
</feature>
<feature type="splice variant" id="VSP_027248" description="In isoform 2." evidence="3">
    <original>QHGPIHMTNL</original>
    <variation>QVQASPVRMR</variation>
    <location>
        <begin position="478"/>
        <end position="487"/>
    </location>
</feature>
<feature type="splice variant" id="VSP_027249" description="In isoform 2." evidence="3">
    <location>
        <begin position="488"/>
        <end position="612"/>
    </location>
</feature>
<feature type="sequence conflict" description="In Ref. 1; BAD32335 and 3; AAH06621." evidence="5" ref="1 3">
    <location>
        <position position="51"/>
    </location>
</feature>
<feature type="sequence conflict" description="In Ref. 2; BAB28574." evidence="5" ref="2">
    <original>N</original>
    <variation>K</variation>
    <location>
        <position position="112"/>
    </location>
</feature>
<feature type="sequence conflict" description="In Ref. 2; BAB28574." evidence="5" ref="2">
    <original>S</original>
    <variation>P</variation>
    <location>
        <position position="533"/>
    </location>
</feature>
<feature type="sequence conflict" description="In Ref. 2; BAB28574." evidence="5" ref="2">
    <original>Q</original>
    <variation>K</variation>
    <location>
        <position position="599"/>
    </location>
</feature>
<evidence type="ECO:0000250" key="1">
    <source>
        <dbReference type="UniProtKB" id="Q7Z7F0"/>
    </source>
</evidence>
<evidence type="ECO:0000256" key="2">
    <source>
        <dbReference type="SAM" id="MobiDB-lite"/>
    </source>
</evidence>
<evidence type="ECO:0000303" key="3">
    <source>
    </source>
</evidence>
<evidence type="ECO:0000303" key="4">
    <source>
    </source>
</evidence>
<evidence type="ECO:0000305" key="5"/>
<sequence length="612" mass="64563">MSAGSATHPAAGGRRSKWDQPAPAPLLFLPPTAPGGEVAGSGASPGGATTAAAPSGALDAAAAVAAKINAMLMAKGKLKPSQNAAEKLQAPGKSLTSNKSKDDLVVAEVEINDVPLTCRNLLTRGQTQDEISRLSGAAVSTRGRFMTTEEKAKVGPGDRPLYLHVQGQTRELVDRAVNRIKEIITNGVVKAATGTSPTFNGATVTVYHQPAPIAQLSPAINQKPSFQSGMHYVQDKLFVGLEHAVPTFNVKEKVEGPGCSYLQHIQIETGAKVFLRGKGSGCIEPASGREAFEPMYIYISHPKPEGLAAAKKLCENLLQTVHAEYSRFVNQINTAVPLPGYTQPSAISSIPPQPPYYPSNGYQSGYPVVPPPQQPVQPPYGVPSIVPPAVSLAPGVLPALPTGVPPVPTQYPITQVQPPASTGQSPISAPFIPAAPVKTALPTGPQPQPQLPAQPQSQKRRFTEELPDERDSGLLGYQHGPIHMTNLGTGFSSQNEIEGAGSKPASSSGKERERDRQLMPPPAFPVTGIKTESDERNGSGALAGSHDYPAKKMKTAEKGFGLVAYAADSSDEEEEHGGHKNASSFPQGWSLGYQYPSSQPRAKQQMPFWMAP</sequence>
<proteinExistence type="evidence at protein level"/>
<protein>
    <recommendedName>
        <fullName evidence="1">KH homology domain-containing protein 4</fullName>
    </recommendedName>
    <alternativeName>
        <fullName evidence="1">Brings lots of money 7</fullName>
    </alternativeName>
    <alternativeName>
        <fullName>Pre-mRNA splicing factor protein Khdc4</fullName>
    </alternativeName>
</protein>
<accession>Q3TCX3</accession>
<accession>Q69ZW1</accession>
<accession>Q8BUQ0</accession>
<accession>Q923C9</accession>
<accession>Q9CZ63</accession>
<accession>Q9D207</accession>
<gene>
    <name type="primary">Khdc4</name>
    <name evidence="1" type="synonym">Blom7</name>
    <name type="synonym">Kiaa0907</name>
</gene>
<organism>
    <name type="scientific">Mus musculus</name>
    <name type="common">Mouse</name>
    <dbReference type="NCBI Taxonomy" id="10090"/>
    <lineage>
        <taxon>Eukaryota</taxon>
        <taxon>Metazoa</taxon>
        <taxon>Chordata</taxon>
        <taxon>Craniata</taxon>
        <taxon>Vertebrata</taxon>
        <taxon>Euteleostomi</taxon>
        <taxon>Mammalia</taxon>
        <taxon>Eutheria</taxon>
        <taxon>Euarchontoglires</taxon>
        <taxon>Glires</taxon>
        <taxon>Rodentia</taxon>
        <taxon>Myomorpha</taxon>
        <taxon>Muroidea</taxon>
        <taxon>Muridae</taxon>
        <taxon>Murinae</taxon>
        <taxon>Mus</taxon>
        <taxon>Mus</taxon>
    </lineage>
</organism>
<dbReference type="EMBL" id="AK173057">
    <property type="protein sequence ID" value="BAD32335.1"/>
    <property type="status" value="ALT_INIT"/>
    <property type="molecule type" value="mRNA"/>
</dbReference>
<dbReference type="EMBL" id="AK012969">
    <property type="protein sequence ID" value="BAB28574.1"/>
    <property type="molecule type" value="mRNA"/>
</dbReference>
<dbReference type="EMBL" id="AK020778">
    <property type="protein sequence ID" value="BAB32207.1"/>
    <property type="molecule type" value="mRNA"/>
</dbReference>
<dbReference type="EMBL" id="AK038617">
    <property type="protein sequence ID" value="BAC30065.1"/>
    <property type="molecule type" value="mRNA"/>
</dbReference>
<dbReference type="EMBL" id="AK083018">
    <property type="protein sequence ID" value="BAC38734.1"/>
    <property type="molecule type" value="mRNA"/>
</dbReference>
<dbReference type="EMBL" id="AK164337">
    <property type="protein sequence ID" value="BAE37746.1"/>
    <property type="molecule type" value="mRNA"/>
</dbReference>
<dbReference type="EMBL" id="AK170490">
    <property type="protein sequence ID" value="BAE41832.1"/>
    <property type="molecule type" value="mRNA"/>
</dbReference>
<dbReference type="EMBL" id="BC006621">
    <property type="protein sequence ID" value="AAH06621.1"/>
    <property type="molecule type" value="mRNA"/>
</dbReference>
<dbReference type="CCDS" id="CCDS17483.1">
    <molecule id="Q3TCX3-1"/>
</dbReference>
<dbReference type="RefSeq" id="NP_083090.2">
    <molecule id="Q3TCX3-1"/>
    <property type="nucleotide sequence ID" value="NM_028814.5"/>
</dbReference>
<dbReference type="SMR" id="Q3TCX3"/>
<dbReference type="BioGRID" id="216571">
    <property type="interactions" value="3"/>
</dbReference>
<dbReference type="FunCoup" id="Q3TCX3">
    <property type="interactions" value="4660"/>
</dbReference>
<dbReference type="IntAct" id="Q3TCX3">
    <property type="interactions" value="1"/>
</dbReference>
<dbReference type="STRING" id="10090.ENSMUSP00000029696"/>
<dbReference type="iPTMnet" id="Q3TCX3"/>
<dbReference type="PhosphoSitePlus" id="Q3TCX3"/>
<dbReference type="jPOST" id="Q3TCX3"/>
<dbReference type="PaxDb" id="10090-ENSMUSP00000029696"/>
<dbReference type="PeptideAtlas" id="Q3TCX3"/>
<dbReference type="ProteomicsDB" id="264743">
    <molecule id="Q3TCX3-1"/>
</dbReference>
<dbReference type="ProteomicsDB" id="264744">
    <molecule id="Q3TCX3-2"/>
</dbReference>
<dbReference type="ProteomicsDB" id="264745">
    <molecule id="Q3TCX3-3"/>
</dbReference>
<dbReference type="ProteomicsDB" id="264746">
    <molecule id="Q3TCX3-4"/>
</dbReference>
<dbReference type="Pumba" id="Q3TCX3"/>
<dbReference type="Antibodypedia" id="1657">
    <property type="antibodies" value="79 antibodies from 20 providers"/>
</dbReference>
<dbReference type="DNASU" id="74200"/>
<dbReference type="Ensembl" id="ENSMUST00000029696.11">
    <molecule id="Q3TCX3-1"/>
    <property type="protein sequence ID" value="ENSMUSP00000029696.7"/>
    <property type="gene ID" value="ENSMUSG00000028060.15"/>
</dbReference>
<dbReference type="Ensembl" id="ENSMUST00000198042.5">
    <molecule id="Q3TCX3-2"/>
    <property type="protein sequence ID" value="ENSMUSP00000142773.2"/>
    <property type="gene ID" value="ENSMUSG00000028060.15"/>
</dbReference>
<dbReference type="Ensembl" id="ENSMUST00000199684.5">
    <molecule id="Q3TCX3-2"/>
    <property type="protein sequence ID" value="ENSMUSP00000142353.2"/>
    <property type="gene ID" value="ENSMUSG00000028060.15"/>
</dbReference>
<dbReference type="GeneID" id="74200"/>
<dbReference type="KEGG" id="mmu:74200"/>
<dbReference type="UCSC" id="uc008pwe.2">
    <molecule id="Q3TCX3-4"/>
    <property type="organism name" value="mouse"/>
</dbReference>
<dbReference type="UCSC" id="uc008pwf.2">
    <molecule id="Q3TCX3-3"/>
    <property type="organism name" value="mouse"/>
</dbReference>
<dbReference type="UCSC" id="uc008pwg.2">
    <molecule id="Q3TCX3-1"/>
    <property type="organism name" value="mouse"/>
</dbReference>
<dbReference type="AGR" id="MGI:1921450"/>
<dbReference type="CTD" id="22889"/>
<dbReference type="MGI" id="MGI:1921450">
    <property type="gene designation" value="Khdc4"/>
</dbReference>
<dbReference type="VEuPathDB" id="HostDB:ENSMUSG00000028060"/>
<dbReference type="eggNOG" id="KOG1960">
    <property type="taxonomic scope" value="Eukaryota"/>
</dbReference>
<dbReference type="GeneTree" id="ENSGT00510000047412"/>
<dbReference type="HOGENOM" id="CLU_032219_1_0_1"/>
<dbReference type="InParanoid" id="Q3TCX3"/>
<dbReference type="OMA" id="IPFWMAP"/>
<dbReference type="OrthoDB" id="397265at2759"/>
<dbReference type="PhylomeDB" id="Q3TCX3"/>
<dbReference type="BioGRID-ORCS" id="74200">
    <property type="hits" value="6 hits in 82 CRISPR screens"/>
</dbReference>
<dbReference type="ChiTaRS" id="Khdc4">
    <property type="organism name" value="mouse"/>
</dbReference>
<dbReference type="PRO" id="PR:Q3TCX3"/>
<dbReference type="Proteomes" id="UP000000589">
    <property type="component" value="Chromosome 3"/>
</dbReference>
<dbReference type="RNAct" id="Q3TCX3">
    <property type="molecule type" value="protein"/>
</dbReference>
<dbReference type="Bgee" id="ENSMUSG00000028060">
    <property type="expression patterns" value="Expressed in undifferentiated genital tubercle and 252 other cell types or tissues"/>
</dbReference>
<dbReference type="ExpressionAtlas" id="Q3TCX3">
    <property type="expression patterns" value="baseline and differential"/>
</dbReference>
<dbReference type="GO" id="GO:0005737">
    <property type="term" value="C:cytoplasm"/>
    <property type="evidence" value="ECO:0000250"/>
    <property type="project" value="UniProtKB"/>
</dbReference>
<dbReference type="GO" id="GO:0005654">
    <property type="term" value="C:nucleoplasm"/>
    <property type="evidence" value="ECO:0007669"/>
    <property type="project" value="Ensembl"/>
</dbReference>
<dbReference type="GO" id="GO:0005634">
    <property type="term" value="C:nucleus"/>
    <property type="evidence" value="ECO:0000250"/>
    <property type="project" value="UniProtKB"/>
</dbReference>
<dbReference type="GO" id="GO:0005681">
    <property type="term" value="C:spliceosomal complex"/>
    <property type="evidence" value="ECO:0007669"/>
    <property type="project" value="Ensembl"/>
</dbReference>
<dbReference type="GO" id="GO:0003723">
    <property type="term" value="F:RNA binding"/>
    <property type="evidence" value="ECO:0000314"/>
    <property type="project" value="MGI"/>
</dbReference>
<dbReference type="GO" id="GO:0006376">
    <property type="term" value="P:mRNA splice site recognition"/>
    <property type="evidence" value="ECO:0000250"/>
    <property type="project" value="UniProtKB"/>
</dbReference>
<dbReference type="CDD" id="cd22385">
    <property type="entry name" value="KH-I_KHDC4_rpt1"/>
    <property type="match status" value="1"/>
</dbReference>
<dbReference type="CDD" id="cd22386">
    <property type="entry name" value="KH-I_KHDC4_rpt2"/>
    <property type="match status" value="1"/>
</dbReference>
<dbReference type="FunFam" id="3.30.1370.10:FF:000035">
    <property type="entry name" value="KH domain-containing 4, pre-mRNA-splicing factor"/>
    <property type="match status" value="1"/>
</dbReference>
<dbReference type="FunFam" id="3.30.1370.10:FF:000045">
    <property type="entry name" value="KH domain-containing 4, pre-mRNA-splicing factor"/>
    <property type="match status" value="1"/>
</dbReference>
<dbReference type="Gene3D" id="3.30.1370.10">
    <property type="entry name" value="K Homology domain, type 1"/>
    <property type="match status" value="2"/>
</dbReference>
<dbReference type="InterPro" id="IPR055256">
    <property type="entry name" value="KH_1_KHDC4/BBP-like"/>
</dbReference>
<dbReference type="InterPro" id="IPR036612">
    <property type="entry name" value="KH_dom_type_1_sf"/>
</dbReference>
<dbReference type="InterPro" id="IPR047890">
    <property type="entry name" value="KHDC4_KH-I_first"/>
</dbReference>
<dbReference type="InterPro" id="IPR047889">
    <property type="entry name" value="KHDC4_KH-I_second"/>
</dbReference>
<dbReference type="InterPro" id="IPR056149">
    <property type="entry name" value="PRP5/DDX46/KHDC4_KH"/>
</dbReference>
<dbReference type="InterPro" id="IPR031121">
    <property type="entry name" value="RIK/BLOM7"/>
</dbReference>
<dbReference type="PANTHER" id="PTHR15744">
    <property type="entry name" value="BLOM7"/>
    <property type="match status" value="1"/>
</dbReference>
<dbReference type="PANTHER" id="PTHR15744:SF0">
    <property type="entry name" value="KH HOMOLOGY DOMAIN-CONTAINING PROTEIN 4"/>
    <property type="match status" value="1"/>
</dbReference>
<dbReference type="Pfam" id="PF22675">
    <property type="entry name" value="KH-I_KHDC4-BBP"/>
    <property type="match status" value="1"/>
</dbReference>
<dbReference type="Pfam" id="PF23469">
    <property type="entry name" value="KH_12"/>
    <property type="match status" value="1"/>
</dbReference>
<dbReference type="SUPFAM" id="SSF54791">
    <property type="entry name" value="Eukaryotic type KH-domain (KH-domain type I)"/>
    <property type="match status" value="2"/>
</dbReference>
<reference key="1">
    <citation type="journal article" date="2004" name="DNA Res.">
        <title>Prediction of the coding sequences of mouse homologues of KIAA gene: IV. The complete nucleotide sequences of 500 mouse KIAA-homologous cDNAs identified by screening of terminal sequences of cDNA clones randomly sampled from size-fractionated libraries.</title>
        <authorList>
            <person name="Okazaki N."/>
            <person name="Kikuno R."/>
            <person name="Ohara R."/>
            <person name="Inamoto S."/>
            <person name="Koseki H."/>
            <person name="Hiraoka S."/>
            <person name="Saga Y."/>
            <person name="Seino S."/>
            <person name="Nishimura M."/>
            <person name="Kaisho T."/>
            <person name="Hoshino K."/>
            <person name="Kitamura H."/>
            <person name="Nagase T."/>
            <person name="Ohara O."/>
            <person name="Koga H."/>
        </authorList>
    </citation>
    <scope>NUCLEOTIDE SEQUENCE [LARGE SCALE MRNA] (ISOFORM 2)</scope>
    <source>
        <tissue>Embryonic tail</tissue>
    </source>
</reference>
<reference key="2">
    <citation type="journal article" date="2005" name="Science">
        <title>The transcriptional landscape of the mammalian genome.</title>
        <authorList>
            <person name="Carninci P."/>
            <person name="Kasukawa T."/>
            <person name="Katayama S."/>
            <person name="Gough J."/>
            <person name="Frith M.C."/>
            <person name="Maeda N."/>
            <person name="Oyama R."/>
            <person name="Ravasi T."/>
            <person name="Lenhard B."/>
            <person name="Wells C."/>
            <person name="Kodzius R."/>
            <person name="Shimokawa K."/>
            <person name="Bajic V.B."/>
            <person name="Brenner S.E."/>
            <person name="Batalov S."/>
            <person name="Forrest A.R."/>
            <person name="Zavolan M."/>
            <person name="Davis M.J."/>
            <person name="Wilming L.G."/>
            <person name="Aidinis V."/>
            <person name="Allen J.E."/>
            <person name="Ambesi-Impiombato A."/>
            <person name="Apweiler R."/>
            <person name="Aturaliya R.N."/>
            <person name="Bailey T.L."/>
            <person name="Bansal M."/>
            <person name="Baxter L."/>
            <person name="Beisel K.W."/>
            <person name="Bersano T."/>
            <person name="Bono H."/>
            <person name="Chalk A.M."/>
            <person name="Chiu K.P."/>
            <person name="Choudhary V."/>
            <person name="Christoffels A."/>
            <person name="Clutterbuck D.R."/>
            <person name="Crowe M.L."/>
            <person name="Dalla E."/>
            <person name="Dalrymple B.P."/>
            <person name="de Bono B."/>
            <person name="Della Gatta G."/>
            <person name="di Bernardo D."/>
            <person name="Down T."/>
            <person name="Engstrom P."/>
            <person name="Fagiolini M."/>
            <person name="Faulkner G."/>
            <person name="Fletcher C.F."/>
            <person name="Fukushima T."/>
            <person name="Furuno M."/>
            <person name="Futaki S."/>
            <person name="Gariboldi M."/>
            <person name="Georgii-Hemming P."/>
            <person name="Gingeras T.R."/>
            <person name="Gojobori T."/>
            <person name="Green R.E."/>
            <person name="Gustincich S."/>
            <person name="Harbers M."/>
            <person name="Hayashi Y."/>
            <person name="Hensch T.K."/>
            <person name="Hirokawa N."/>
            <person name="Hill D."/>
            <person name="Huminiecki L."/>
            <person name="Iacono M."/>
            <person name="Ikeo K."/>
            <person name="Iwama A."/>
            <person name="Ishikawa T."/>
            <person name="Jakt M."/>
            <person name="Kanapin A."/>
            <person name="Katoh M."/>
            <person name="Kawasawa Y."/>
            <person name="Kelso J."/>
            <person name="Kitamura H."/>
            <person name="Kitano H."/>
            <person name="Kollias G."/>
            <person name="Krishnan S.P."/>
            <person name="Kruger A."/>
            <person name="Kummerfeld S.K."/>
            <person name="Kurochkin I.V."/>
            <person name="Lareau L.F."/>
            <person name="Lazarevic D."/>
            <person name="Lipovich L."/>
            <person name="Liu J."/>
            <person name="Liuni S."/>
            <person name="McWilliam S."/>
            <person name="Madan Babu M."/>
            <person name="Madera M."/>
            <person name="Marchionni L."/>
            <person name="Matsuda H."/>
            <person name="Matsuzawa S."/>
            <person name="Miki H."/>
            <person name="Mignone F."/>
            <person name="Miyake S."/>
            <person name="Morris K."/>
            <person name="Mottagui-Tabar S."/>
            <person name="Mulder N."/>
            <person name="Nakano N."/>
            <person name="Nakauchi H."/>
            <person name="Ng P."/>
            <person name="Nilsson R."/>
            <person name="Nishiguchi S."/>
            <person name="Nishikawa S."/>
            <person name="Nori F."/>
            <person name="Ohara O."/>
            <person name="Okazaki Y."/>
            <person name="Orlando V."/>
            <person name="Pang K.C."/>
            <person name="Pavan W.J."/>
            <person name="Pavesi G."/>
            <person name="Pesole G."/>
            <person name="Petrovsky N."/>
            <person name="Piazza S."/>
            <person name="Reed J."/>
            <person name="Reid J.F."/>
            <person name="Ring B.Z."/>
            <person name="Ringwald M."/>
            <person name="Rost B."/>
            <person name="Ruan Y."/>
            <person name="Salzberg S.L."/>
            <person name="Sandelin A."/>
            <person name="Schneider C."/>
            <person name="Schoenbach C."/>
            <person name="Sekiguchi K."/>
            <person name="Semple C.A."/>
            <person name="Seno S."/>
            <person name="Sessa L."/>
            <person name="Sheng Y."/>
            <person name="Shibata Y."/>
            <person name="Shimada H."/>
            <person name="Shimada K."/>
            <person name="Silva D."/>
            <person name="Sinclair B."/>
            <person name="Sperling S."/>
            <person name="Stupka E."/>
            <person name="Sugiura K."/>
            <person name="Sultana R."/>
            <person name="Takenaka Y."/>
            <person name="Taki K."/>
            <person name="Tammoja K."/>
            <person name="Tan S.L."/>
            <person name="Tang S."/>
            <person name="Taylor M.S."/>
            <person name="Tegner J."/>
            <person name="Teichmann S.A."/>
            <person name="Ueda H.R."/>
            <person name="van Nimwegen E."/>
            <person name="Verardo R."/>
            <person name="Wei C.L."/>
            <person name="Yagi K."/>
            <person name="Yamanishi H."/>
            <person name="Zabarovsky E."/>
            <person name="Zhu S."/>
            <person name="Zimmer A."/>
            <person name="Hide W."/>
            <person name="Bult C."/>
            <person name="Grimmond S.M."/>
            <person name="Teasdale R.D."/>
            <person name="Liu E.T."/>
            <person name="Brusic V."/>
            <person name="Quackenbush J."/>
            <person name="Wahlestedt C."/>
            <person name="Mattick J.S."/>
            <person name="Hume D.A."/>
            <person name="Kai C."/>
            <person name="Sasaki D."/>
            <person name="Tomaru Y."/>
            <person name="Fukuda S."/>
            <person name="Kanamori-Katayama M."/>
            <person name="Suzuki M."/>
            <person name="Aoki J."/>
            <person name="Arakawa T."/>
            <person name="Iida J."/>
            <person name="Imamura K."/>
            <person name="Itoh M."/>
            <person name="Kato T."/>
            <person name="Kawaji H."/>
            <person name="Kawagashira N."/>
            <person name="Kawashima T."/>
            <person name="Kojima M."/>
            <person name="Kondo S."/>
            <person name="Konno H."/>
            <person name="Nakano K."/>
            <person name="Ninomiya N."/>
            <person name="Nishio T."/>
            <person name="Okada M."/>
            <person name="Plessy C."/>
            <person name="Shibata K."/>
            <person name="Shiraki T."/>
            <person name="Suzuki S."/>
            <person name="Tagami M."/>
            <person name="Waki K."/>
            <person name="Watahiki A."/>
            <person name="Okamura-Oho Y."/>
            <person name="Suzuki H."/>
            <person name="Kawai J."/>
            <person name="Hayashizaki Y."/>
        </authorList>
    </citation>
    <scope>NUCLEOTIDE SEQUENCE [LARGE SCALE MRNA] (ISOFORMS 1; 3 AND 4)</scope>
    <source>
        <strain>C57BL/6J</strain>
        <strain>NOD</strain>
        <tissue>Dendritic cell</tissue>
        <tissue>Embryo</tissue>
        <tissue>Embryonic spinal cord</tissue>
        <tissue>Embryonic spinal ganglion</tissue>
        <tissue>Hypothalamus</tissue>
        <tissue>Thymus</tissue>
    </source>
</reference>
<reference key="3">
    <citation type="journal article" date="2004" name="Genome Res.">
        <title>The status, quality, and expansion of the NIH full-length cDNA project: the Mammalian Gene Collection (MGC).</title>
        <authorList>
            <consortium name="The MGC Project Team"/>
        </authorList>
    </citation>
    <scope>NUCLEOTIDE SEQUENCE [LARGE SCALE MRNA] (ISOFORM 1)</scope>
    <source>
        <strain>FVB/N</strain>
        <tissue>Mammary tumor</tissue>
    </source>
</reference>
<name>KHDC4_MOUSE</name>
<keyword id="KW-0025">Alternative splicing</keyword>
<keyword id="KW-0963">Cytoplasm</keyword>
<keyword id="KW-0507">mRNA processing</keyword>
<keyword id="KW-0508">mRNA splicing</keyword>
<keyword id="KW-0539">Nucleus</keyword>
<keyword id="KW-0597">Phosphoprotein</keyword>
<keyword id="KW-1185">Reference proteome</keyword>
<keyword id="KW-0694">RNA-binding</keyword>
<comment type="function">
    <text evidence="1">RNA-binding protein involved in pre-mRNA splicing. Interacts with the PRP19C/Prp19 complex/NTC/Nineteen complex which is part of the spliceosome. Involved in regulating splice site selection. Binds preferentially RNA with A/C rich sequences and poly-C stretches.</text>
</comment>
<comment type="subunit">
    <text evidence="1">Interacts with PRPF19. Isoform 2: Interacts with U2AF65.</text>
</comment>
<comment type="interaction">
    <interactant intactId="EBI-11298408">
        <id>Q3TCX3</id>
    </interactant>
    <interactant intactId="EBI-744603">
        <id>Q15637</id>
        <label>SF1</label>
    </interactant>
    <organismsDiffer>true</organismsDiffer>
    <experiments>3</experiments>
</comment>
<comment type="subcellular location">
    <subcellularLocation>
        <location evidence="1">Nucleus</location>
    </subcellularLocation>
    <subcellularLocation>
        <location evidence="1">Cytoplasm</location>
    </subcellularLocation>
</comment>
<comment type="alternative products">
    <event type="alternative splicing"/>
    <isoform>
        <id>Q3TCX3-1</id>
        <name>1</name>
        <sequence type="displayed"/>
    </isoform>
    <isoform>
        <id>Q3TCX3-2</id>
        <name>2</name>
        <sequence type="described" ref="VSP_027248 VSP_027249"/>
    </isoform>
    <isoform>
        <id>Q3TCX3-3</id>
        <name>3</name>
        <sequence type="described" ref="VSP_027246 VSP_027247"/>
    </isoform>
    <isoform>
        <id>Q3TCX3-4</id>
        <name>4</name>
        <sequence type="described" ref="VSP_027244 VSP_027245"/>
    </isoform>
</comment>
<comment type="domain">
    <text evidence="1">The C-terminal part is necessary for the interaction with the PRP19C/Prp19 complex/NTC/Nineteen complex.</text>
</comment>
<comment type="domain">
    <text evidence="1">The KH domains mediate RNA-binding.</text>
</comment>
<comment type="similarity">
    <text evidence="5">Belongs to the KHDC4 family.</text>
</comment>
<comment type="sequence caution" evidence="5">
    <conflict type="erroneous initiation">
        <sequence resource="EMBL-CDS" id="BAD32335"/>
    </conflict>
    <text>Extended N-terminus.</text>
</comment>